<sequence length="219" mass="25448">MSLASIPSSSPVASPYFRCRTYIFSFSSSPLCLYFPRGDSTSLRPRVRALRTESDGAKIGNSESYGSELLRRPRIASEESSEEEEEEEEENSEGDEFVDWEDKILEVTVPLVGFVRMILHSGKYANRDRLSPEHERTIIEMLLPYHPECEKKIGCGIDYIMVGHHPDFESSRCMFIVRKDGEVVDFSYWKCIKGLIKKKYPLYADSFILRHFRKRRQNR</sequence>
<accession>Q9C642</accession>
<name>DCL_ARATH</name>
<proteinExistence type="evidence at transcript level"/>
<evidence type="ECO:0000255" key="1"/>
<evidence type="ECO:0000256" key="2">
    <source>
        <dbReference type="SAM" id="MobiDB-lite"/>
    </source>
</evidence>
<evidence type="ECO:0000269" key="3">
    <source>
    </source>
</evidence>
<evidence type="ECO:0000303" key="4">
    <source>
    </source>
</evidence>
<evidence type="ECO:0000305" key="5"/>
<evidence type="ECO:0000312" key="6">
    <source>
        <dbReference type="Araport" id="AT1G45230"/>
    </source>
</evidence>
<evidence type="ECO:0000312" key="7">
    <source>
        <dbReference type="EMBL" id="AAG50632.1"/>
    </source>
</evidence>
<gene>
    <name evidence="4" type="primary">DCL</name>
    <name evidence="6" type="ordered locus">At1g45230</name>
    <name evidence="7" type="ORF">F2G19.1</name>
</gene>
<feature type="transit peptide" description="Chloroplast" evidence="1">
    <location>
        <begin position="1"/>
        <end position="48"/>
    </location>
</feature>
<feature type="chain" id="PRO_0000439875" description="Protein DCL homolog, chloroplastic" evidence="1">
    <location>
        <begin position="49"/>
        <end position="219"/>
    </location>
</feature>
<feature type="region of interest" description="Disordered" evidence="2">
    <location>
        <begin position="70"/>
        <end position="96"/>
    </location>
</feature>
<feature type="compositionally biased region" description="Acidic residues" evidence="2">
    <location>
        <begin position="79"/>
        <end position="96"/>
    </location>
</feature>
<keyword id="KW-0150">Chloroplast</keyword>
<keyword id="KW-0934">Plastid</keyword>
<keyword id="KW-1185">Reference proteome</keyword>
<keyword id="KW-0809">Transit peptide</keyword>
<comment type="function">
    <text evidence="3">Required for normal plastid function and plant development. Required for correct plastid ribosome assembly. Required for processing and maturation of 4.5S rRNA.</text>
</comment>
<comment type="subcellular location">
    <subcellularLocation>
        <location evidence="3">Plastid</location>
        <location evidence="3">Chloroplast</location>
    </subcellularLocation>
</comment>
<comment type="tissue specificity">
    <text evidence="3">Expressed in leaves, stems, flowers and siliques.</text>
</comment>
<reference key="1">
    <citation type="journal article" date="2000" name="Nature">
        <title>Sequence and analysis of chromosome 1 of the plant Arabidopsis thaliana.</title>
        <authorList>
            <person name="Theologis A."/>
            <person name="Ecker J.R."/>
            <person name="Palm C.J."/>
            <person name="Federspiel N.A."/>
            <person name="Kaul S."/>
            <person name="White O."/>
            <person name="Alonso J."/>
            <person name="Altafi H."/>
            <person name="Araujo R."/>
            <person name="Bowman C.L."/>
            <person name="Brooks S.Y."/>
            <person name="Buehler E."/>
            <person name="Chan A."/>
            <person name="Chao Q."/>
            <person name="Chen H."/>
            <person name="Cheuk R.F."/>
            <person name="Chin C.W."/>
            <person name="Chung M.K."/>
            <person name="Conn L."/>
            <person name="Conway A.B."/>
            <person name="Conway A.R."/>
            <person name="Creasy T.H."/>
            <person name="Dewar K."/>
            <person name="Dunn P."/>
            <person name="Etgu P."/>
            <person name="Feldblyum T.V."/>
            <person name="Feng J.-D."/>
            <person name="Fong B."/>
            <person name="Fujii C.Y."/>
            <person name="Gill J.E."/>
            <person name="Goldsmith A.D."/>
            <person name="Haas B."/>
            <person name="Hansen N.F."/>
            <person name="Hughes B."/>
            <person name="Huizar L."/>
            <person name="Hunter J.L."/>
            <person name="Jenkins J."/>
            <person name="Johnson-Hopson C."/>
            <person name="Khan S."/>
            <person name="Khaykin E."/>
            <person name="Kim C.J."/>
            <person name="Koo H.L."/>
            <person name="Kremenetskaia I."/>
            <person name="Kurtz D.B."/>
            <person name="Kwan A."/>
            <person name="Lam B."/>
            <person name="Langin-Hooper S."/>
            <person name="Lee A."/>
            <person name="Lee J.M."/>
            <person name="Lenz C.A."/>
            <person name="Li J.H."/>
            <person name="Li Y.-P."/>
            <person name="Lin X."/>
            <person name="Liu S.X."/>
            <person name="Liu Z.A."/>
            <person name="Luros J.S."/>
            <person name="Maiti R."/>
            <person name="Marziali A."/>
            <person name="Militscher J."/>
            <person name="Miranda M."/>
            <person name="Nguyen M."/>
            <person name="Nierman W.C."/>
            <person name="Osborne B.I."/>
            <person name="Pai G."/>
            <person name="Peterson J."/>
            <person name="Pham P.K."/>
            <person name="Rizzo M."/>
            <person name="Rooney T."/>
            <person name="Rowley D."/>
            <person name="Sakano H."/>
            <person name="Salzberg S.L."/>
            <person name="Schwartz J.R."/>
            <person name="Shinn P."/>
            <person name="Southwick A.M."/>
            <person name="Sun H."/>
            <person name="Tallon L.J."/>
            <person name="Tambunga G."/>
            <person name="Toriumi M.J."/>
            <person name="Town C.D."/>
            <person name="Utterback T."/>
            <person name="Van Aken S."/>
            <person name="Vaysberg M."/>
            <person name="Vysotskaia V.S."/>
            <person name="Walker M."/>
            <person name="Wu D."/>
            <person name="Yu G."/>
            <person name="Fraser C.M."/>
            <person name="Venter J.C."/>
            <person name="Davis R.W."/>
        </authorList>
    </citation>
    <scope>NUCLEOTIDE SEQUENCE [LARGE SCALE GENOMIC DNA]</scope>
    <source>
        <strain>cv. Columbia</strain>
    </source>
</reference>
<reference key="2">
    <citation type="journal article" date="2017" name="Plant J.">
        <title>Araport11: a complete reannotation of the Arabidopsis thaliana reference genome.</title>
        <authorList>
            <person name="Cheng C.Y."/>
            <person name="Krishnakumar V."/>
            <person name="Chan A.P."/>
            <person name="Thibaud-Nissen F."/>
            <person name="Schobel S."/>
            <person name="Town C.D."/>
        </authorList>
    </citation>
    <scope>GENOME REANNOTATION</scope>
    <source>
        <strain>cv. Columbia</strain>
    </source>
</reference>
<reference key="3">
    <citation type="journal article" date="2003" name="Science">
        <title>Empirical analysis of transcriptional activity in the Arabidopsis genome.</title>
        <authorList>
            <person name="Yamada K."/>
            <person name="Lim J."/>
            <person name="Dale J.M."/>
            <person name="Chen H."/>
            <person name="Shinn P."/>
            <person name="Palm C.J."/>
            <person name="Southwick A.M."/>
            <person name="Wu H.C."/>
            <person name="Kim C.J."/>
            <person name="Nguyen M."/>
            <person name="Pham P.K."/>
            <person name="Cheuk R.F."/>
            <person name="Karlin-Newmann G."/>
            <person name="Liu S.X."/>
            <person name="Lam B."/>
            <person name="Sakano H."/>
            <person name="Wu T."/>
            <person name="Yu G."/>
            <person name="Miranda M."/>
            <person name="Quach H.L."/>
            <person name="Tripp M."/>
            <person name="Chang C.H."/>
            <person name="Lee J.M."/>
            <person name="Toriumi M.J."/>
            <person name="Chan M.M."/>
            <person name="Tang C.C."/>
            <person name="Onodera C.S."/>
            <person name="Deng J.M."/>
            <person name="Akiyama K."/>
            <person name="Ansari Y."/>
            <person name="Arakawa T."/>
            <person name="Banh J."/>
            <person name="Banno F."/>
            <person name="Bowser L."/>
            <person name="Brooks S.Y."/>
            <person name="Carninci P."/>
            <person name="Chao Q."/>
            <person name="Choy N."/>
            <person name="Enju A."/>
            <person name="Goldsmith A.D."/>
            <person name="Gurjal M."/>
            <person name="Hansen N.F."/>
            <person name="Hayashizaki Y."/>
            <person name="Johnson-Hopson C."/>
            <person name="Hsuan V.W."/>
            <person name="Iida K."/>
            <person name="Karnes M."/>
            <person name="Khan S."/>
            <person name="Koesema E."/>
            <person name="Ishida J."/>
            <person name="Jiang P.X."/>
            <person name="Jones T."/>
            <person name="Kawai J."/>
            <person name="Kamiya A."/>
            <person name="Meyers C."/>
            <person name="Nakajima M."/>
            <person name="Narusaka M."/>
            <person name="Seki M."/>
            <person name="Sakurai T."/>
            <person name="Satou M."/>
            <person name="Tamse R."/>
            <person name="Vaysberg M."/>
            <person name="Wallender E.K."/>
            <person name="Wong C."/>
            <person name="Yamamura Y."/>
            <person name="Yuan S."/>
            <person name="Shinozaki K."/>
            <person name="Davis R.W."/>
            <person name="Theologis A."/>
            <person name="Ecker J.R."/>
        </authorList>
    </citation>
    <scope>NUCLEOTIDE SEQUENCE [LARGE SCALE MRNA]</scope>
    <source>
        <strain>cv. Columbia</strain>
    </source>
</reference>
<reference key="4">
    <citation type="submission" date="2004-06" db="EMBL/GenBank/DDBJ databases">
        <title>Arabidopsis ORF clones.</title>
        <authorList>
            <person name="Cheuk R.F."/>
            <person name="Chen H."/>
            <person name="Kim C.J."/>
            <person name="Shinn P."/>
            <person name="Ecker J.R."/>
        </authorList>
    </citation>
    <scope>NUCLEOTIDE SEQUENCE [LARGE SCALE MRNA]</scope>
    <source>
        <strain>cv. Columbia</strain>
    </source>
</reference>
<reference key="5">
    <citation type="submission" date="2005-03" db="EMBL/GenBank/DDBJ databases">
        <title>Large-scale analysis of RIKEN Arabidopsis full-length (RAFL) cDNAs.</title>
        <authorList>
            <person name="Totoki Y."/>
            <person name="Seki M."/>
            <person name="Ishida J."/>
            <person name="Nakajima M."/>
            <person name="Enju A."/>
            <person name="Kamiya A."/>
            <person name="Narusaka M."/>
            <person name="Shin-i T."/>
            <person name="Nakagawa M."/>
            <person name="Sakamoto N."/>
            <person name="Oishi K."/>
            <person name="Kohara Y."/>
            <person name="Kobayashi M."/>
            <person name="Toyoda A."/>
            <person name="Sakaki Y."/>
            <person name="Sakurai T."/>
            <person name="Iida K."/>
            <person name="Akiyama K."/>
            <person name="Satou M."/>
            <person name="Toyoda T."/>
            <person name="Konagaya A."/>
            <person name="Carninci P."/>
            <person name="Kawai J."/>
            <person name="Hayashizaki Y."/>
            <person name="Shinozaki K."/>
        </authorList>
    </citation>
    <scope>NUCLEOTIDE SEQUENCE [LARGE SCALE MRNA]</scope>
    <source>
        <strain>cv. Columbia</strain>
    </source>
</reference>
<reference key="6">
    <citation type="journal article" date="2004" name="Planta">
        <title>Altered expression of the Arabidopsis ortholog of DCL affects normal plant development.</title>
        <authorList>
            <person name="Bellaoui M."/>
            <person name="Gruissem W."/>
        </authorList>
    </citation>
    <scope>FUNCTION</scope>
    <scope>SUBCELLULAR LOCATION</scope>
    <scope>TISSUE SPECIFICITY</scope>
</reference>
<protein>
    <recommendedName>
        <fullName evidence="5">Protein DCL homolog, chloroplastic</fullName>
        <shortName evidence="4">AtDCL</shortName>
    </recommendedName>
</protein>
<organism>
    <name type="scientific">Arabidopsis thaliana</name>
    <name type="common">Mouse-ear cress</name>
    <dbReference type="NCBI Taxonomy" id="3702"/>
    <lineage>
        <taxon>Eukaryota</taxon>
        <taxon>Viridiplantae</taxon>
        <taxon>Streptophyta</taxon>
        <taxon>Embryophyta</taxon>
        <taxon>Tracheophyta</taxon>
        <taxon>Spermatophyta</taxon>
        <taxon>Magnoliopsida</taxon>
        <taxon>eudicotyledons</taxon>
        <taxon>Gunneridae</taxon>
        <taxon>Pentapetalae</taxon>
        <taxon>rosids</taxon>
        <taxon>malvids</taxon>
        <taxon>Brassicales</taxon>
        <taxon>Brassicaceae</taxon>
        <taxon>Camelineae</taxon>
        <taxon>Arabidopsis</taxon>
    </lineage>
</organism>
<dbReference type="EMBL" id="AC083835">
    <property type="protein sequence ID" value="AAG50632.1"/>
    <property type="molecule type" value="Genomic_DNA"/>
</dbReference>
<dbReference type="EMBL" id="CP002684">
    <property type="protein sequence ID" value="AEE32113.1"/>
    <property type="molecule type" value="Genomic_DNA"/>
</dbReference>
<dbReference type="EMBL" id="AY128277">
    <property type="protein sequence ID" value="AAM91086.1"/>
    <property type="molecule type" value="mRNA"/>
</dbReference>
<dbReference type="EMBL" id="BT014877">
    <property type="protein sequence ID" value="AAT41860.1"/>
    <property type="molecule type" value="mRNA"/>
</dbReference>
<dbReference type="EMBL" id="AK220622">
    <property type="protein sequence ID" value="BAD95026.1"/>
    <property type="molecule type" value="mRNA"/>
</dbReference>
<dbReference type="PIR" id="C96510">
    <property type="entry name" value="C96510"/>
</dbReference>
<dbReference type="RefSeq" id="NP_683398.1">
    <property type="nucleotide sequence ID" value="NM_148557.4"/>
</dbReference>
<dbReference type="SMR" id="Q9C642"/>
<dbReference type="FunCoup" id="Q9C642">
    <property type="interactions" value="1928"/>
</dbReference>
<dbReference type="STRING" id="3702.Q9C642"/>
<dbReference type="iPTMnet" id="Q9C642"/>
<dbReference type="PaxDb" id="3702-AT1G45230.1"/>
<dbReference type="ProteomicsDB" id="223985"/>
<dbReference type="EnsemblPlants" id="AT1G45230.1">
    <property type="protein sequence ID" value="AT1G45230.1"/>
    <property type="gene ID" value="AT1G45230"/>
</dbReference>
<dbReference type="GeneID" id="841096"/>
<dbReference type="Gramene" id="AT1G45230.1">
    <property type="protein sequence ID" value="AT1G45230.1"/>
    <property type="gene ID" value="AT1G45230"/>
</dbReference>
<dbReference type="KEGG" id="ath:AT1G45230"/>
<dbReference type="Araport" id="AT1G45230"/>
<dbReference type="TAIR" id="AT1G45230"/>
<dbReference type="eggNOG" id="ENOG502RXJ7">
    <property type="taxonomic scope" value="Eukaryota"/>
</dbReference>
<dbReference type="HOGENOM" id="CLU_071424_0_1_1"/>
<dbReference type="InParanoid" id="Q9C642"/>
<dbReference type="OMA" id="PFHPECE"/>
<dbReference type="PhylomeDB" id="Q9C642"/>
<dbReference type="PRO" id="PR:Q9C642"/>
<dbReference type="Proteomes" id="UP000006548">
    <property type="component" value="Chromosome 1"/>
</dbReference>
<dbReference type="ExpressionAtlas" id="Q9C642">
    <property type="expression patterns" value="baseline and differential"/>
</dbReference>
<dbReference type="GO" id="GO:0009507">
    <property type="term" value="C:chloroplast"/>
    <property type="evidence" value="ECO:0000314"/>
    <property type="project" value="UniProtKB"/>
</dbReference>
<dbReference type="GO" id="GO:0003729">
    <property type="term" value="F:mRNA binding"/>
    <property type="evidence" value="ECO:0000314"/>
    <property type="project" value="TAIR"/>
</dbReference>
<dbReference type="GO" id="GO:0009658">
    <property type="term" value="P:chloroplast organization"/>
    <property type="evidence" value="ECO:0000315"/>
    <property type="project" value="UniProtKB"/>
</dbReference>
<dbReference type="GO" id="GO:1901259">
    <property type="term" value="P:chloroplast rRNA processing"/>
    <property type="evidence" value="ECO:0000315"/>
    <property type="project" value="UniProtKB"/>
</dbReference>
<dbReference type="FunFam" id="3.10.450.40:FF:000008">
    <property type="entry name" value="Protein DCL, chloroplastic"/>
    <property type="match status" value="1"/>
</dbReference>
<dbReference type="Gene3D" id="3.10.450.40">
    <property type="match status" value="1"/>
</dbReference>
<dbReference type="InterPro" id="IPR044673">
    <property type="entry name" value="DCL-like"/>
</dbReference>
<dbReference type="PANTHER" id="PTHR33415:SF15">
    <property type="entry name" value="PROTEIN DCL HOMOLOG, CHLOROPLASTIC"/>
    <property type="match status" value="1"/>
</dbReference>
<dbReference type="PANTHER" id="PTHR33415">
    <property type="entry name" value="PROTEIN EMBRYO DEFECTIVE 514"/>
    <property type="match status" value="1"/>
</dbReference>
<dbReference type="Pfam" id="PF11523">
    <property type="entry name" value="DUF3223"/>
    <property type="match status" value="1"/>
</dbReference>